<organism>
    <name type="scientific">Ross river virus (strain 213970)</name>
    <name type="common">RRV</name>
    <dbReference type="NCBI Taxonomy" id="11030"/>
    <lineage>
        <taxon>Viruses</taxon>
        <taxon>Riboviria</taxon>
        <taxon>Orthornavirae</taxon>
        <taxon>Kitrinoviricota</taxon>
        <taxon>Alsuviricetes</taxon>
        <taxon>Martellivirales</taxon>
        <taxon>Togaviridae</taxon>
        <taxon>Alphavirus</taxon>
        <taxon>Ross River virus</taxon>
    </lineage>
</organism>
<sequence>SVTEHFNVYKATRPYXXXCADCGDGYFCYSPVAIEKIRDEASDGMLKIQVSAQIGLDKAGTHAHTKLRYMAGHDVQESKRDSLRVYTSAACSIHGTMGHFIVAHCPPGDYLKVSFEDADSHVKACKVQYKHNPLPVGREKFVVRPHFGVELPCTSYQLTTAPTDEEIDMHTPPDIPDRTLLSQTAGNVKITAGGRTIRYNCTWGRDNVGTTSTDKTINACKIDQCHAAVTSHDKWQFTSPFVPRADQTARKGKVHVPFPLTNVTCRVPLARAPDVTYGKKEVTLRLHPDHPTLFSYRSLGAEPHPYEEWVDKFSERIIPVTEEGXEYQWGNNPPVRLWAXLTTEGKPHGWPHEIIQYYYGLYPAATIAAVSGXSLMALLTLAATCCMLATARRKCLTPYALTPGAVVPLTLGLXXCAPRANA</sequence>
<evidence type="ECO:0000250" key="1"/>
<evidence type="ECO:0000250" key="2">
    <source>
        <dbReference type="UniProtKB" id="P03315"/>
    </source>
</evidence>
<evidence type="ECO:0000250" key="3">
    <source>
        <dbReference type="UniProtKB" id="P03316"/>
    </source>
</evidence>
<evidence type="ECO:0000250" key="4">
    <source>
        <dbReference type="UniProtKB" id="Q86925"/>
    </source>
</evidence>
<evidence type="ECO:0000250" key="5">
    <source>
        <dbReference type="UniProtKB" id="Q8JUX5"/>
    </source>
</evidence>
<evidence type="ECO:0000255" key="6"/>
<comment type="function">
    <text evidence="2">Spike glycoprotein E2: Plays a role in viral attachment to target host cell, by binding to the cell receptor. Synthesized as a p62 precursor which is processed by furin at the cell membrane just before virion budding, giving rise to E2-E1 heterodimer. The p62-E1 heterodimer is stable, whereas E2-E1 is unstable and dissociate at low pH. p62 is processed at the last step, presumably to avoid E1 fusion activation before its final export to cell surface. E2 C-terminus contains a transitory transmembrane that would be disrupted by palmitoylation, resulting in reorientation of the C-terminal tail from lumenal to cytoplasmic side. This step is critical since E2 C-terminus is involved in budding by interacting with capsid proteins. This release of E2 C-terminus in cytoplasm occurs lately in protein export, and precludes premature assembly of particles at the endoplasmic reticulum membrane.</text>
</comment>
<comment type="subunit">
    <text evidence="2 3">Spike glycoprotein E2: Processing of the precursor of protein E3/E2 into E2 and E3 results in a heterodimer of the spike glycoproteins E2 and E1. Spike glycoprotein E2: Spike at virion surface are constituted of three E2-E1 heterodimers. Spike glycoprotein E2: Interacts with 6K protein.</text>
</comment>
<comment type="subcellular location">
    <molecule>Spike glycoprotein E2</molecule>
    <subcellularLocation>
        <location evidence="5">Virion membrane</location>
        <topology evidence="6">Single-pass type I membrane protein</topology>
    </subcellularLocation>
    <subcellularLocation>
        <location evidence="3">Host cell membrane</location>
        <topology evidence="5">Single-pass type I membrane protein</topology>
    </subcellularLocation>
</comment>
<comment type="domain">
    <text evidence="2">Structural polyprotein: As soon as the capsid protein has been autocleaved, an internal uncleaved signal peptide directs the remaining polyprotein to the endoplasmic reticulum.</text>
</comment>
<comment type="PTM">
    <text evidence="2">Structural polyprotein: Specific enzymatic cleavages in vivo yield mature proteins. Capsid protein is auto-cleaved during polyprotein translation, unmasking a signal peptide at the N-terminus of the precursor of E3/E2. The remaining polyprotein is then targeted to the host endoplasmic reticulum, where host signal peptidase cleaves it into pE2, 6K and E1 proteins. pE2 is further processed to mature E3 and E2 by host furin in trans-Golgi vesicle.</text>
</comment>
<comment type="PTM">
    <text evidence="2">Spike glycoprotein E2: Palmitoylated via thioester bonds. These palmitoylations may induce disruption of the C-terminus transmembrane. This would result in the reorientation of E2 C-terminus from lumenal to cytoplasmic side.</text>
</comment>
<comment type="PTM">
    <text evidence="2">Spike glycoprotein E2: N-glycosylated.</text>
</comment>
<comment type="miscellaneous">
    <text evidence="4">Structural polyprotein: Translated from a subgenomic RNA synthesized during togavirus replication.</text>
</comment>
<feature type="chain" id="PRO_0000041296" description="Spike glycoprotein E2">
    <location>
        <begin position="1"/>
        <end position="422"/>
    </location>
</feature>
<feature type="topological domain" description="Extracellular" evidence="6">
    <location>
        <begin position="1"/>
        <end position="359"/>
    </location>
</feature>
<feature type="transmembrane region" description="Helical" evidence="6">
    <location>
        <begin position="360"/>
        <end position="382"/>
    </location>
</feature>
<feature type="topological domain" description="Cytoplasmic" evidence="6">
    <location>
        <begin position="383"/>
        <end position="422"/>
    </location>
</feature>
<feature type="region of interest" description="Transient transmembrane before p62-6K protein processing" evidence="6">
    <location>
        <begin position="395"/>
        <end position="415"/>
    </location>
</feature>
<feature type="lipid moiety-binding region" description="S-palmitoyl cysteine; by host" evidence="6">
    <location>
        <position position="385"/>
    </location>
</feature>
<feature type="lipid moiety-binding region" description="S-palmitoyl cysteine; by host" evidence="1">
    <location>
        <position position="395"/>
    </location>
</feature>
<feature type="lipid moiety-binding region" description="S-palmitoyl cysteine; by host" evidence="1">
    <location>
        <position position="416"/>
    </location>
</feature>
<feature type="glycosylation site" description="N-linked (GlcNAc...) asparagine; by host" evidence="6">
    <location>
        <position position="200"/>
    </location>
</feature>
<feature type="glycosylation site" description="N-linked (GlcNAc...) asparagine; by host" evidence="6">
    <location>
        <position position="262"/>
    </location>
</feature>
<feature type="non-terminal residue">
    <location>
        <position position="1"/>
    </location>
</feature>
<feature type="non-terminal residue">
    <location>
        <position position="422"/>
    </location>
</feature>
<name>POLS_RRV2</name>
<organismHost>
    <name type="scientific">Aedes</name>
    <dbReference type="NCBI Taxonomy" id="7158"/>
</organismHost>
<organismHost>
    <name type="scientific">Culex annulirostris</name>
    <name type="common">Common banded mosquito</name>
    <dbReference type="NCBI Taxonomy" id="162997"/>
</organismHost>
<organismHost>
    <name type="scientific">Homo sapiens</name>
    <name type="common">Human</name>
    <dbReference type="NCBI Taxonomy" id="9606"/>
</organismHost>
<organismHost>
    <name type="scientific">Macropus sp.</name>
    <name type="common">kangaroo</name>
    <dbReference type="NCBI Taxonomy" id="9322"/>
</organismHost>
<dbReference type="EMBL" id="M23709">
    <property type="protein sequence ID" value="AAA47406.1"/>
    <property type="molecule type" value="Genomic_RNA"/>
</dbReference>
<dbReference type="PIR" id="B31833">
    <property type="entry name" value="VHWV70"/>
</dbReference>
<dbReference type="GO" id="GO:0020002">
    <property type="term" value="C:host cell plasma membrane"/>
    <property type="evidence" value="ECO:0007669"/>
    <property type="project" value="UniProtKB-SubCell"/>
</dbReference>
<dbReference type="GO" id="GO:0016020">
    <property type="term" value="C:membrane"/>
    <property type="evidence" value="ECO:0007669"/>
    <property type="project" value="UniProtKB-KW"/>
</dbReference>
<dbReference type="GO" id="GO:0039619">
    <property type="term" value="C:T=4 icosahedral viral capsid"/>
    <property type="evidence" value="ECO:0007669"/>
    <property type="project" value="UniProtKB-KW"/>
</dbReference>
<dbReference type="GO" id="GO:0055036">
    <property type="term" value="C:virion membrane"/>
    <property type="evidence" value="ECO:0007669"/>
    <property type="project" value="UniProtKB-SubCell"/>
</dbReference>
<dbReference type="GO" id="GO:0003723">
    <property type="term" value="F:RNA binding"/>
    <property type="evidence" value="ECO:0007669"/>
    <property type="project" value="UniProtKB-KW"/>
</dbReference>
<dbReference type="GO" id="GO:0005198">
    <property type="term" value="F:structural molecule activity"/>
    <property type="evidence" value="ECO:0007669"/>
    <property type="project" value="InterPro"/>
</dbReference>
<dbReference type="GO" id="GO:0046718">
    <property type="term" value="P:symbiont entry into host cell"/>
    <property type="evidence" value="ECO:0007669"/>
    <property type="project" value="UniProtKB-KW"/>
</dbReference>
<dbReference type="GO" id="GO:0019062">
    <property type="term" value="P:virion attachment to host cell"/>
    <property type="evidence" value="ECO:0007669"/>
    <property type="project" value="UniProtKB-KW"/>
</dbReference>
<dbReference type="Gene3D" id="2.60.40.3200">
    <property type="entry name" value="Alphavirus E2 glycoprotein, A domain"/>
    <property type="match status" value="1"/>
</dbReference>
<dbReference type="Gene3D" id="2.60.40.4310">
    <property type="entry name" value="Alphavirus E2 glycoprotein, domain B"/>
    <property type="match status" value="1"/>
</dbReference>
<dbReference type="Gene3D" id="2.60.40.2400">
    <property type="entry name" value="Alphavirus E2 glycoprotein, domain C"/>
    <property type="match status" value="1"/>
</dbReference>
<dbReference type="InterPro" id="IPR000936">
    <property type="entry name" value="Alpha_E2_glycop"/>
</dbReference>
<dbReference type="InterPro" id="IPR042304">
    <property type="entry name" value="Alphavir_E2_A"/>
</dbReference>
<dbReference type="InterPro" id="IPR042305">
    <property type="entry name" value="Alphavir_E2_B"/>
</dbReference>
<dbReference type="InterPro" id="IPR042306">
    <property type="entry name" value="Alphavir_E2_C"/>
</dbReference>
<dbReference type="Pfam" id="PF00943">
    <property type="entry name" value="Alpha_E2_glycop"/>
    <property type="match status" value="1"/>
</dbReference>
<accession>P17517</accession>
<proteinExistence type="inferred from homology"/>
<keyword id="KW-0167">Capsid protein</keyword>
<keyword id="KW-0325">Glycoprotein</keyword>
<keyword id="KW-1032">Host cell membrane</keyword>
<keyword id="KW-1043">Host membrane</keyword>
<keyword id="KW-0945">Host-virus interaction</keyword>
<keyword id="KW-0449">Lipoprotein</keyword>
<keyword id="KW-0472">Membrane</keyword>
<keyword id="KW-0564">Palmitate</keyword>
<keyword id="KW-0694">RNA-binding</keyword>
<keyword id="KW-1144">T=4 icosahedral capsid protein</keyword>
<keyword id="KW-0812">Transmembrane</keyword>
<keyword id="KW-1133">Transmembrane helix</keyword>
<keyword id="KW-1161">Viral attachment to host cell</keyword>
<keyword id="KW-0946">Virion</keyword>
<keyword id="KW-1160">Virus entry into host cell</keyword>
<protein>
    <recommendedName>
        <fullName>Structural polyprotein</fullName>
    </recommendedName>
    <component>
        <recommendedName>
            <fullName>Spike glycoprotein E2</fullName>
        </recommendedName>
        <alternativeName>
            <fullName>E2 envelope glycoprotein</fullName>
        </alternativeName>
    </component>
</protein>
<reference key="1">
    <citation type="journal article" date="1988" name="Virology">
        <title>Genetic stability of Ross River virus during epidemic spread in nonimmune humans.</title>
        <authorList>
            <person name="Burness A.T.H."/>
            <person name="Pardoe I."/>
            <person name="Faragher S.G."/>
            <person name="Vrati S."/>
            <person name="Dalgarno L."/>
        </authorList>
    </citation>
    <scope>NUCLEOTIDE SEQUENCE [GENOMIC RNA]</scope>
</reference>